<protein>
    <recommendedName>
        <fullName evidence="7">Glycogen phosphorylase, muscle form</fullName>
        <ecNumber evidence="7">2.4.1.1</ecNumber>
    </recommendedName>
    <alternativeName>
        <fullName>Myophosphorylase</fullName>
    </alternativeName>
</protein>
<reference key="1">
    <citation type="journal article" date="1996" name="Neuromuscul. Disord.">
        <title>Cloning of bovine muscle glycogen phosphorylase cDNA and identification of a mutation in cattle with myophosphorylase deficiency, an animal model for McArdle's disease.</title>
        <authorList>
            <person name="Tsujino S."/>
            <person name="Shanske S."/>
            <person name="Valberg S.J."/>
            <person name="Cardinet G.H. III"/>
            <person name="Smith B.P."/>
            <person name="DiMauro S."/>
        </authorList>
    </citation>
    <scope>NUCLEOTIDE SEQUENCE [MRNA]</scope>
    <scope>VARIANT GSD-V TRP-490</scope>
    <scope>DISEASE</scope>
    <scope>FUNCTION</scope>
    <scope>CATALYTIC ACTIVITY</scope>
    <source>
        <tissue>Skeletal muscle</tissue>
    </source>
</reference>
<feature type="initiator methionine" description="Removed" evidence="1">
    <location>
        <position position="1"/>
    </location>
</feature>
<feature type="chain" id="PRO_0000188528" description="Glycogen phosphorylase, muscle form">
    <location>
        <begin position="2"/>
        <end position="842"/>
    </location>
</feature>
<feature type="binding site" evidence="3">
    <location>
        <position position="43"/>
    </location>
    <ligand>
        <name>AMP</name>
        <dbReference type="ChEBI" id="CHEBI:456215"/>
    </ligand>
</feature>
<feature type="binding site" evidence="1">
    <location>
        <position position="76"/>
    </location>
    <ligand>
        <name>AMP</name>
        <dbReference type="ChEBI" id="CHEBI:456215"/>
    </ligand>
</feature>
<feature type="binding site" evidence="3">
    <location>
        <begin position="310"/>
        <end position="319"/>
    </location>
    <ligand>
        <name>AMP</name>
        <dbReference type="ChEBI" id="CHEBI:456215"/>
    </ligand>
</feature>
<feature type="site" description="Involved in the association of subunits" evidence="1">
    <location>
        <position position="109"/>
    </location>
</feature>
<feature type="site" description="Involved in the association of subunits" evidence="1">
    <location>
        <position position="143"/>
    </location>
</feature>
<feature type="site" description="May be involved in allosteric control" evidence="1">
    <location>
        <position position="156"/>
    </location>
</feature>
<feature type="modified residue" description="N-acetylserine" evidence="1">
    <location>
        <position position="2"/>
    </location>
</feature>
<feature type="modified residue" description="Phosphoserine; by PHK; in form phosphorylase A" evidence="3">
    <location>
        <position position="15"/>
    </location>
</feature>
<feature type="modified residue" description="Phosphotyrosine" evidence="2">
    <location>
        <position position="204"/>
    </location>
</feature>
<feature type="modified residue" description="Phosphotyrosine" evidence="2">
    <location>
        <position position="227"/>
    </location>
</feature>
<feature type="modified residue" description="Phosphoserine" evidence="4">
    <location>
        <position position="430"/>
    </location>
</feature>
<feature type="modified residue" description="Phosphotyrosine" evidence="4">
    <location>
        <position position="473"/>
    </location>
</feature>
<feature type="modified residue" description="N6-(pyridoxal phosphate)lysine" evidence="1">
    <location>
        <position position="681"/>
    </location>
</feature>
<feature type="modified residue" description="Phosphoserine" evidence="2">
    <location>
        <position position="747"/>
    </location>
</feature>
<feature type="modified residue" description="Phosphoserine" evidence="2">
    <location>
        <position position="748"/>
    </location>
</feature>
<feature type="sequence variant" description="In GSD-V." evidence="5">
    <original>R</original>
    <variation>W</variation>
    <location>
        <position position="490"/>
    </location>
</feature>
<sequence length="842" mass="97293">MSRPLTDQEKRKQISVRGLAGVENVTELKKNFNRHLHFTLVKDRNVATPRDYYFALAYTVRDHLVGRWIRTQQHYYEKDPKRIYYLSLEFYIGRTLQNTMVNLALENACDEATYQLGLDMEELEEIEEDAGLGNGGLGRLAACFLDSMATLGLAAYGYGIRYEFGIFNQKISGGWQMEEADDWLRYGNPWEKARPEFTLPVHFYGRVEHTSQGAKWVDTQVVLAMPYDTPVPGYRNNVVNTMRLWSAKAPNDFNLKDFNVGGYIQAVLDRNLAENISRVLYPNDNFFEGKELRLKQEYFVVAATLQDIIRRFKSSKFGCLDPVRTNFDAFPDKVAIQLNDTHPSLAIPELMRILVDQERLEWEKAWEVTVKTCAYTNHTVLPEALERWPVHLIETLLPRHLQIIYEINQRFLNRVAAAFPGDVDRLRRMSLVEEGAVKRINMAHLCIAGSHAVNGVARIHSEILKKTIFKDFYELEPHKFQNKTNGITPRRWLVMCNPGLAEIIAERIGEEYIADLDQLRKLLSYVDDESFIRDVAKVKQENKLKFSAYLEKEYKVHINPNSLFDIQVKRIHEYKRQLLNCLHVITLYNRIKKEPNKFFVPRTVMIGGKAAPGYHMAKMIIKLITAIGDVVNHDPVVGDRLRVIFLENYRVSLAEKVIPAADLSEQISTAGTEASGTGNMKFMLNGALTIGTMDGANVEMAEEAGEENFFIFGMRVEDVERLDQKGYNAQEYYDRIPELRHVIDQLSSGFFSPKQPDLFKDIVNMLMHHDRFKVFADYEEYIKCQERVSALYKNPREWTRMVIRNIATSGKFSSDRTIAQYAREIWGVEPTRQRMPAPDEKI</sequence>
<proteinExistence type="evidence at protein level"/>
<keyword id="KW-0007">Acetylation</keyword>
<keyword id="KW-0021">Allosteric enzyme</keyword>
<keyword id="KW-0119">Carbohydrate metabolism</keyword>
<keyword id="KW-0225">Disease variant</keyword>
<keyword id="KW-0321">Glycogen metabolism</keyword>
<keyword id="KW-0322">Glycogen storage disease</keyword>
<keyword id="KW-0328">Glycosyltransferase</keyword>
<keyword id="KW-0547">Nucleotide-binding</keyword>
<keyword id="KW-0597">Phosphoprotein</keyword>
<keyword id="KW-0663">Pyridoxal phosphate</keyword>
<keyword id="KW-1185">Reference proteome</keyword>
<keyword id="KW-0808">Transferase</keyword>
<organism>
    <name type="scientific">Bos taurus</name>
    <name type="common">Bovine</name>
    <dbReference type="NCBI Taxonomy" id="9913"/>
    <lineage>
        <taxon>Eukaryota</taxon>
        <taxon>Metazoa</taxon>
        <taxon>Chordata</taxon>
        <taxon>Craniata</taxon>
        <taxon>Vertebrata</taxon>
        <taxon>Euteleostomi</taxon>
        <taxon>Mammalia</taxon>
        <taxon>Eutheria</taxon>
        <taxon>Laurasiatheria</taxon>
        <taxon>Artiodactyla</taxon>
        <taxon>Ruminantia</taxon>
        <taxon>Pecora</taxon>
        <taxon>Bovidae</taxon>
        <taxon>Bovinae</taxon>
        <taxon>Bos</taxon>
    </lineage>
</organism>
<gene>
    <name evidence="3" type="primary">PYGM</name>
</gene>
<comment type="function">
    <text evidence="7">Allosteric enzyme that catalyzes the rate-limiting step in glycogen catabolism, the phosphorolytic cleavage of glycogen to produce glucose-1-phosphate, and plays a central role in maintaining cellular and organismal glucose homeostasis.</text>
</comment>
<comment type="catalytic activity">
    <reaction evidence="7">
        <text>[(1-&gt;4)-alpha-D-glucosyl](n) + phosphate = [(1-&gt;4)-alpha-D-glucosyl](n-1) + alpha-D-glucose 1-phosphate</text>
        <dbReference type="Rhea" id="RHEA:41732"/>
        <dbReference type="Rhea" id="RHEA-COMP:9584"/>
        <dbReference type="Rhea" id="RHEA-COMP:9586"/>
        <dbReference type="ChEBI" id="CHEBI:15444"/>
        <dbReference type="ChEBI" id="CHEBI:43474"/>
        <dbReference type="ChEBI" id="CHEBI:58601"/>
        <dbReference type="EC" id="2.4.1.1"/>
    </reaction>
    <physiologicalReaction direction="left-to-right" evidence="7">
        <dbReference type="Rhea" id="RHEA:41733"/>
    </physiologicalReaction>
</comment>
<comment type="cofactor">
    <cofactor evidence="1">
        <name>pyridoxal 5'-phosphate</name>
        <dbReference type="ChEBI" id="CHEBI:597326"/>
    </cofactor>
</comment>
<comment type="activity regulation">
    <text evidence="3">Allosterically regulated through the non-covalent binding of metabolites, being activated by AMP and inhibited by ATP, ADP, and glucose-6-phosphate. The activity is also controlled by post-translational modifications including phosphorylation.</text>
</comment>
<comment type="subunit">
    <text evidence="3">Homodimer. Homotetramer; to form the enzymatically active phosphorylase A.</text>
</comment>
<comment type="PTM">
    <text evidence="3">Phosphorylation of Ser-15 converts phosphorylase B (unphosphorylated) to phosphorylase A.</text>
</comment>
<comment type="disease">
    <text evidence="5">Defects in PYGM are the cause of glycogen storage disease V (GSD-V); also known as McArdle disease.</text>
</comment>
<comment type="similarity">
    <text evidence="6">Belongs to the glycogen phosphorylase family.</text>
</comment>
<dbReference type="EC" id="2.4.1.1" evidence="7"/>
<dbReference type="EMBL" id="S82859">
    <property type="protein sequence ID" value="AAB46846.1"/>
    <property type="molecule type" value="mRNA"/>
</dbReference>
<dbReference type="RefSeq" id="NP_786980.1">
    <property type="nucleotide sequence ID" value="NM_175786.2"/>
</dbReference>
<dbReference type="SMR" id="P79334"/>
<dbReference type="FunCoup" id="P79334">
    <property type="interactions" value="850"/>
</dbReference>
<dbReference type="STRING" id="9913.ENSBTAP00000001373"/>
<dbReference type="CAZy" id="GT35">
    <property type="family name" value="Glycosyltransferase Family 35"/>
</dbReference>
<dbReference type="PaxDb" id="9913-ENSBTAP00000001373"/>
<dbReference type="PeptideAtlas" id="P79334"/>
<dbReference type="GeneID" id="327664"/>
<dbReference type="KEGG" id="bta:327664"/>
<dbReference type="CTD" id="5837"/>
<dbReference type="eggNOG" id="KOG2099">
    <property type="taxonomic scope" value="Eukaryota"/>
</dbReference>
<dbReference type="InParanoid" id="P79334"/>
<dbReference type="OrthoDB" id="9215500at2759"/>
<dbReference type="Proteomes" id="UP000009136">
    <property type="component" value="Unplaced"/>
</dbReference>
<dbReference type="GO" id="GO:0005737">
    <property type="term" value="C:cytoplasm"/>
    <property type="evidence" value="ECO:0000318"/>
    <property type="project" value="GO_Central"/>
</dbReference>
<dbReference type="GO" id="GO:0008184">
    <property type="term" value="F:glycogen phosphorylase activity"/>
    <property type="evidence" value="ECO:0000250"/>
    <property type="project" value="UniProtKB"/>
</dbReference>
<dbReference type="GO" id="GO:0000166">
    <property type="term" value="F:nucleotide binding"/>
    <property type="evidence" value="ECO:0007669"/>
    <property type="project" value="UniProtKB-KW"/>
</dbReference>
<dbReference type="GO" id="GO:0030170">
    <property type="term" value="F:pyridoxal phosphate binding"/>
    <property type="evidence" value="ECO:0000318"/>
    <property type="project" value="GO_Central"/>
</dbReference>
<dbReference type="GO" id="GO:0005980">
    <property type="term" value="P:glycogen catabolic process"/>
    <property type="evidence" value="ECO:0000250"/>
    <property type="project" value="UniProtKB"/>
</dbReference>
<dbReference type="CDD" id="cd04300">
    <property type="entry name" value="GT35_Glycogen_Phosphorylase"/>
    <property type="match status" value="1"/>
</dbReference>
<dbReference type="FunFam" id="3.40.50.2000:FF:000005">
    <property type="entry name" value="Alpha-1,4 glucan phosphorylase"/>
    <property type="match status" value="1"/>
</dbReference>
<dbReference type="FunFam" id="3.40.50.2000:FF:000153">
    <property type="entry name" value="Alpha-1,4 glucan phosphorylase"/>
    <property type="match status" value="1"/>
</dbReference>
<dbReference type="FunFam" id="3.40.50.2000:FF:000197">
    <property type="entry name" value="Alpha-1,4 glucan phosphorylase"/>
    <property type="match status" value="1"/>
</dbReference>
<dbReference type="Gene3D" id="3.40.50.2000">
    <property type="entry name" value="Glycogen Phosphorylase B"/>
    <property type="match status" value="2"/>
</dbReference>
<dbReference type="InterPro" id="IPR011833">
    <property type="entry name" value="Glycg_phsphrylas"/>
</dbReference>
<dbReference type="InterPro" id="IPR000811">
    <property type="entry name" value="Glyco_trans_35"/>
</dbReference>
<dbReference type="InterPro" id="IPR035090">
    <property type="entry name" value="Pyridoxal_P_attach_site"/>
</dbReference>
<dbReference type="NCBIfam" id="TIGR02093">
    <property type="entry name" value="P_ylase"/>
    <property type="match status" value="1"/>
</dbReference>
<dbReference type="PANTHER" id="PTHR11468">
    <property type="entry name" value="GLYCOGEN PHOSPHORYLASE"/>
    <property type="match status" value="1"/>
</dbReference>
<dbReference type="PANTHER" id="PTHR11468:SF32">
    <property type="entry name" value="GLYCOGEN PHOSPHORYLASE, MUSCLE FORM"/>
    <property type="match status" value="1"/>
</dbReference>
<dbReference type="Pfam" id="PF00343">
    <property type="entry name" value="Phosphorylase"/>
    <property type="match status" value="1"/>
</dbReference>
<dbReference type="PIRSF" id="PIRSF000460">
    <property type="entry name" value="Pprylas_GlgP"/>
    <property type="match status" value="1"/>
</dbReference>
<dbReference type="SUPFAM" id="SSF53756">
    <property type="entry name" value="UDP-Glycosyltransferase/glycogen phosphorylase"/>
    <property type="match status" value="1"/>
</dbReference>
<dbReference type="PROSITE" id="PS00102">
    <property type="entry name" value="PHOSPHORYLASE"/>
    <property type="match status" value="1"/>
</dbReference>
<accession>P79334</accession>
<evidence type="ECO:0000250" key="1">
    <source>
        <dbReference type="UniProtKB" id="P00489"/>
    </source>
</evidence>
<evidence type="ECO:0000250" key="2">
    <source>
        <dbReference type="UniProtKB" id="P09812"/>
    </source>
</evidence>
<evidence type="ECO:0000250" key="3">
    <source>
        <dbReference type="UniProtKB" id="P11217"/>
    </source>
</evidence>
<evidence type="ECO:0000250" key="4">
    <source>
        <dbReference type="UniProtKB" id="Q9WUB3"/>
    </source>
</evidence>
<evidence type="ECO:0000269" key="5">
    <source>
    </source>
</evidence>
<evidence type="ECO:0000305" key="6"/>
<evidence type="ECO:0000305" key="7">
    <source>
    </source>
</evidence>
<name>PYGM_BOVIN</name>